<feature type="chain" id="PRO_0000233122" description="Dual serine/threonine and tyrosine protein kinase">
    <location>
        <begin position="1"/>
        <end position="930"/>
    </location>
</feature>
<feature type="domain" description="Protein kinase" evidence="4">
    <location>
        <begin position="653"/>
        <end position="907"/>
    </location>
</feature>
<feature type="coiled-coil region" evidence="3">
    <location>
        <begin position="383"/>
        <end position="428"/>
    </location>
</feature>
<feature type="active site" description="Proton acceptor" evidence="4 5">
    <location>
        <position position="778"/>
    </location>
</feature>
<feature type="binding site" evidence="4">
    <location>
        <begin position="659"/>
        <end position="667"/>
    </location>
    <ligand>
        <name>ATP</name>
        <dbReference type="ChEBI" id="CHEBI:30616"/>
    </ligand>
</feature>
<feature type="binding site" evidence="4">
    <location>
        <position position="682"/>
    </location>
    <ligand>
        <name>ATP</name>
        <dbReference type="ChEBI" id="CHEBI:30616"/>
    </ligand>
</feature>
<comment type="function">
    <text evidence="2">May act as a positive regulator of ERK phosphorylation downstream of fibroblast growth factor-receptor activation. May induce both caspase-dependent apoptosis and caspase-independent cell death.</text>
</comment>
<comment type="catalytic activity">
    <reaction>
        <text>L-seryl-[protein] + ATP = O-phospho-L-seryl-[protein] + ADP + H(+)</text>
        <dbReference type="Rhea" id="RHEA:17989"/>
        <dbReference type="Rhea" id="RHEA-COMP:9863"/>
        <dbReference type="Rhea" id="RHEA-COMP:11604"/>
        <dbReference type="ChEBI" id="CHEBI:15378"/>
        <dbReference type="ChEBI" id="CHEBI:29999"/>
        <dbReference type="ChEBI" id="CHEBI:30616"/>
        <dbReference type="ChEBI" id="CHEBI:83421"/>
        <dbReference type="ChEBI" id="CHEBI:456216"/>
        <dbReference type="EC" id="2.7.12.1"/>
    </reaction>
</comment>
<comment type="catalytic activity">
    <reaction>
        <text>L-threonyl-[protein] + ATP = O-phospho-L-threonyl-[protein] + ADP + H(+)</text>
        <dbReference type="Rhea" id="RHEA:46608"/>
        <dbReference type="Rhea" id="RHEA-COMP:11060"/>
        <dbReference type="Rhea" id="RHEA-COMP:11605"/>
        <dbReference type="ChEBI" id="CHEBI:15378"/>
        <dbReference type="ChEBI" id="CHEBI:30013"/>
        <dbReference type="ChEBI" id="CHEBI:30616"/>
        <dbReference type="ChEBI" id="CHEBI:61977"/>
        <dbReference type="ChEBI" id="CHEBI:456216"/>
        <dbReference type="EC" id="2.7.12.1"/>
    </reaction>
</comment>
<comment type="catalytic activity">
    <reaction>
        <text>L-tyrosyl-[protein] + ATP = O-phospho-L-tyrosyl-[protein] + ADP + H(+)</text>
        <dbReference type="Rhea" id="RHEA:10596"/>
        <dbReference type="Rhea" id="RHEA-COMP:10136"/>
        <dbReference type="Rhea" id="RHEA-COMP:20101"/>
        <dbReference type="ChEBI" id="CHEBI:15378"/>
        <dbReference type="ChEBI" id="CHEBI:30616"/>
        <dbReference type="ChEBI" id="CHEBI:46858"/>
        <dbReference type="ChEBI" id="CHEBI:61978"/>
        <dbReference type="ChEBI" id="CHEBI:456216"/>
        <dbReference type="EC" id="2.7.12.1"/>
    </reaction>
</comment>
<comment type="subcellular location">
    <subcellularLocation>
        <location evidence="1">Cytoplasm</location>
    </subcellularLocation>
    <subcellularLocation>
        <location evidence="1">Cell membrane</location>
    </subcellularLocation>
    <subcellularLocation>
        <location evidence="1">Apical cell membrane</location>
    </subcellularLocation>
    <subcellularLocation>
        <location evidence="1">Basolateral cell membrane</location>
    </subcellularLocation>
    <subcellularLocation>
        <location evidence="1">Cell junction</location>
    </subcellularLocation>
</comment>
<comment type="tissue specificity">
    <text evidence="6">Widely expressed with the highest expression in brain and ovary.</text>
</comment>
<comment type="similarity">
    <text evidence="4">Belongs to the protein kinase superfamily. Ser/Thr protein kinase family.</text>
</comment>
<sequence length="930" mass="105410">MEGEGAPSWRGGPGGLIRELCRSFGHYNRHLARLQHNLRETKKFFRDVKYSQGNLFASGAAIGEGSPSGAGGGGTRDGGQNFISFPRHEEEHLQQTVSWHPCLLILGQNCNAKCQLLNILLGEKLLPTTKISSEENCKRRRIRFTHGTQTRVSLALPEQYELVHMMAAHRGHWDTIPEEDLEIRGDSEDPAHRIAELEVVLPYSLLKEVDVVVAPCRGFQSAEATLEEYMNQVLLIVIFAISEAELSSSDENELREIKEKFSLPIFFFKVPESGVELISPKKTDNEKSSLYCQLMDLEYLSTNHCSCGAPSPDAVAQSMLVEQLEKLRLLSTFSRQVLQKHLVEAATSLNEVHCRCLNIFINQAFDMQRDLQITPKRLEYTRRKENELYESLMNIANRKQEEMKDMIIETLSNMKEELLEDAANMEFKDIIIPENGEPVSSKDIKCCIKQIQELIISRLNQAVANKLISSVDYLRESFVGTLERCLKSLEESWEVSVHPARSLEKSKDVSVHITSNYLKQILNAAYHVEVTFHSGSTVTRMLWEQIKQIIQRITWVSPPAITSDWKRKVAQDAIESLSASKLAKSICSQFRTRLNSSHEAFAASLRQLEDGHSGRLEKTEDLWLKVRKDHAPRLARLSLESRSLQDVLLHGKPKLGRELGRGQYGVVYLCDSWGGHFPCALKSVVPPDEKHWNDLALEFHYMRSLQSHERLVDLHGSVIDYGYGGGSSIAVLLIMERLHRDLYTGLKAGLELETRLQIALDVVEGIRYLHSQGLVHRDIKLKNVLLDKKNRAKITDLGFCKPEAMMSGSIVGTPIHMAPELFTGKYDNSVDVYAFGILFWYICSGHVKLPEAFERCASKDHLWNNVRRGVRPERLPVFDEECWQLMEACWDGDSSQRPLLGIVQPMLQGIMDRLCKSSSEHPNKGLDDST</sequence>
<accession>Q6XUX0</accession>
<reference key="1">
    <citation type="journal article" date="2006" name="Biochim. Biophys. Acta">
        <title>Dusty protein kinases: primary structure, gene evolution, tissue specific expression and unique features of the catalytic domain.</title>
        <authorList>
            <person name="Peng J."/>
            <person name="Dong W."/>
            <person name="Chen Y."/>
            <person name="Mo R."/>
            <person name="Cheng J.-F."/>
            <person name="Hui C.-C."/>
            <person name="Mohandas N."/>
            <person name="Huang C.-H."/>
        </authorList>
    </citation>
    <scope>NUCLEOTIDE SEQUENCE [MRNA]</scope>
    <scope>TISSUE SPECIFICITY</scope>
    <source>
        <tissue>Brain</tissue>
    </source>
</reference>
<dbReference type="EC" id="2.7.12.1"/>
<dbReference type="EMBL" id="AY208853">
    <property type="protein sequence ID" value="AAP42421.1"/>
    <property type="molecule type" value="mRNA"/>
</dbReference>
<dbReference type="EMBL" id="AY429677">
    <property type="protein sequence ID" value="AAS55393.1"/>
    <property type="molecule type" value="mRNA"/>
</dbReference>
<dbReference type="RefSeq" id="NP_989837.1">
    <property type="nucleotide sequence ID" value="NM_204506.2"/>
</dbReference>
<dbReference type="SMR" id="Q6XUX0"/>
<dbReference type="FunCoup" id="Q6XUX0">
    <property type="interactions" value="1603"/>
</dbReference>
<dbReference type="STRING" id="9031.ENSGALP00000048862"/>
<dbReference type="PaxDb" id="9031-ENSGALP00000034586"/>
<dbReference type="GeneID" id="395171"/>
<dbReference type="KEGG" id="gga:395171"/>
<dbReference type="CTD" id="25778"/>
<dbReference type="VEuPathDB" id="HostDB:geneid_395171"/>
<dbReference type="eggNOG" id="KOG0192">
    <property type="taxonomic scope" value="Eukaryota"/>
</dbReference>
<dbReference type="InParanoid" id="Q6XUX0"/>
<dbReference type="OrthoDB" id="122279at2759"/>
<dbReference type="PhylomeDB" id="Q6XUX0"/>
<dbReference type="PRO" id="PR:Q6XUX0"/>
<dbReference type="Proteomes" id="UP000000539">
    <property type="component" value="Unassembled WGS sequence"/>
</dbReference>
<dbReference type="GO" id="GO:0070161">
    <property type="term" value="C:anchoring junction"/>
    <property type="evidence" value="ECO:0007669"/>
    <property type="project" value="UniProtKB-SubCell"/>
</dbReference>
<dbReference type="GO" id="GO:0016324">
    <property type="term" value="C:apical plasma membrane"/>
    <property type="evidence" value="ECO:0000250"/>
    <property type="project" value="UniProtKB"/>
</dbReference>
<dbReference type="GO" id="GO:0016323">
    <property type="term" value="C:basolateral plasma membrane"/>
    <property type="evidence" value="ECO:0000250"/>
    <property type="project" value="UniProtKB"/>
</dbReference>
<dbReference type="GO" id="GO:0005737">
    <property type="term" value="C:cytoplasm"/>
    <property type="evidence" value="ECO:0000250"/>
    <property type="project" value="UniProtKB"/>
</dbReference>
<dbReference type="GO" id="GO:0005524">
    <property type="term" value="F:ATP binding"/>
    <property type="evidence" value="ECO:0007669"/>
    <property type="project" value="UniProtKB-KW"/>
</dbReference>
<dbReference type="GO" id="GO:0106310">
    <property type="term" value="F:protein serine kinase activity"/>
    <property type="evidence" value="ECO:0007669"/>
    <property type="project" value="RHEA"/>
</dbReference>
<dbReference type="GO" id="GO:0004674">
    <property type="term" value="F:protein serine/threonine kinase activity"/>
    <property type="evidence" value="ECO:0007669"/>
    <property type="project" value="UniProtKB-KW"/>
</dbReference>
<dbReference type="GO" id="GO:0004712">
    <property type="term" value="F:protein serine/threonine/tyrosine kinase activity"/>
    <property type="evidence" value="ECO:0007669"/>
    <property type="project" value="UniProtKB-EC"/>
</dbReference>
<dbReference type="GO" id="GO:0004713">
    <property type="term" value="F:protein tyrosine kinase activity"/>
    <property type="evidence" value="ECO:0007669"/>
    <property type="project" value="UniProtKB-KW"/>
</dbReference>
<dbReference type="GO" id="GO:0044344">
    <property type="term" value="P:cellular response to fibroblast growth factor stimulus"/>
    <property type="evidence" value="ECO:0000318"/>
    <property type="project" value="GO_Central"/>
</dbReference>
<dbReference type="GO" id="GO:0043066">
    <property type="term" value="P:negative regulation of apoptotic process"/>
    <property type="evidence" value="ECO:0000318"/>
    <property type="project" value="GO_Central"/>
</dbReference>
<dbReference type="GO" id="GO:0070374">
    <property type="term" value="P:positive regulation of ERK1 and ERK2 cascade"/>
    <property type="evidence" value="ECO:0000318"/>
    <property type="project" value="GO_Central"/>
</dbReference>
<dbReference type="GO" id="GO:0045743">
    <property type="term" value="P:positive regulation of fibroblast growth factor receptor signaling pathway"/>
    <property type="evidence" value="ECO:0000318"/>
    <property type="project" value="GO_Central"/>
</dbReference>
<dbReference type="CDD" id="cd13975">
    <property type="entry name" value="PKc_Dusty"/>
    <property type="match status" value="1"/>
</dbReference>
<dbReference type="FunFam" id="1.10.510.10:FF:000244">
    <property type="entry name" value="Dual serine/threonine and tyrosine protein kinase"/>
    <property type="match status" value="1"/>
</dbReference>
<dbReference type="Gene3D" id="1.10.510.10">
    <property type="entry name" value="Transferase(Phosphotransferase) domain 1"/>
    <property type="match status" value="1"/>
</dbReference>
<dbReference type="InterPro" id="IPR051302">
    <property type="entry name" value="Dual_SerThr-Tyr_Kinase"/>
</dbReference>
<dbReference type="InterPro" id="IPR011009">
    <property type="entry name" value="Kinase-like_dom_sf"/>
</dbReference>
<dbReference type="InterPro" id="IPR000719">
    <property type="entry name" value="Prot_kinase_dom"/>
</dbReference>
<dbReference type="InterPro" id="IPR017441">
    <property type="entry name" value="Protein_kinase_ATP_BS"/>
</dbReference>
<dbReference type="InterPro" id="IPR008271">
    <property type="entry name" value="Ser/Thr_kinase_AS"/>
</dbReference>
<dbReference type="PANTHER" id="PTHR46392">
    <property type="entry name" value="DUAL SERINE/THREONINE AND TYROSINE PROTEIN KINASE"/>
    <property type="match status" value="1"/>
</dbReference>
<dbReference type="PANTHER" id="PTHR46392:SF1">
    <property type="entry name" value="DUAL SERINE_THREONINE AND TYROSINE PROTEIN KINASE"/>
    <property type="match status" value="1"/>
</dbReference>
<dbReference type="Pfam" id="PF00069">
    <property type="entry name" value="Pkinase"/>
    <property type="match status" value="1"/>
</dbReference>
<dbReference type="SMART" id="SM00220">
    <property type="entry name" value="S_TKc"/>
    <property type="match status" value="1"/>
</dbReference>
<dbReference type="SUPFAM" id="SSF56112">
    <property type="entry name" value="Protein kinase-like (PK-like)"/>
    <property type="match status" value="1"/>
</dbReference>
<dbReference type="PROSITE" id="PS00107">
    <property type="entry name" value="PROTEIN_KINASE_ATP"/>
    <property type="match status" value="1"/>
</dbReference>
<dbReference type="PROSITE" id="PS50011">
    <property type="entry name" value="PROTEIN_KINASE_DOM"/>
    <property type="match status" value="1"/>
</dbReference>
<dbReference type="PROSITE" id="PS00108">
    <property type="entry name" value="PROTEIN_KINASE_ST"/>
    <property type="match status" value="1"/>
</dbReference>
<organism>
    <name type="scientific">Gallus gallus</name>
    <name type="common">Chicken</name>
    <dbReference type="NCBI Taxonomy" id="9031"/>
    <lineage>
        <taxon>Eukaryota</taxon>
        <taxon>Metazoa</taxon>
        <taxon>Chordata</taxon>
        <taxon>Craniata</taxon>
        <taxon>Vertebrata</taxon>
        <taxon>Euteleostomi</taxon>
        <taxon>Archelosauria</taxon>
        <taxon>Archosauria</taxon>
        <taxon>Dinosauria</taxon>
        <taxon>Saurischia</taxon>
        <taxon>Theropoda</taxon>
        <taxon>Coelurosauria</taxon>
        <taxon>Aves</taxon>
        <taxon>Neognathae</taxon>
        <taxon>Galloanserae</taxon>
        <taxon>Galliformes</taxon>
        <taxon>Phasianidae</taxon>
        <taxon>Phasianinae</taxon>
        <taxon>Gallus</taxon>
    </lineage>
</organism>
<protein>
    <recommendedName>
        <fullName>Dual serine/threonine and tyrosine protein kinase</fullName>
        <ecNumber>2.7.12.1</ecNumber>
    </recommendedName>
    <alternativeName>
        <fullName>Dusty protein kinase</fullName>
        <shortName>Dusty PK</shortName>
    </alternativeName>
    <alternativeName>
        <fullName>Receptor-interacting serine/threonine-protein kinase 5</fullName>
    </alternativeName>
</protein>
<proteinExistence type="evidence at transcript level"/>
<keyword id="KW-0067">ATP-binding</keyword>
<keyword id="KW-0965">Cell junction</keyword>
<keyword id="KW-1003">Cell membrane</keyword>
<keyword id="KW-0175">Coiled coil</keyword>
<keyword id="KW-0963">Cytoplasm</keyword>
<keyword id="KW-0418">Kinase</keyword>
<keyword id="KW-0472">Membrane</keyword>
<keyword id="KW-0547">Nucleotide-binding</keyword>
<keyword id="KW-1185">Reference proteome</keyword>
<keyword id="KW-0723">Serine/threonine-protein kinase</keyword>
<keyword id="KW-0808">Transferase</keyword>
<keyword id="KW-0829">Tyrosine-protein kinase</keyword>
<name>DUSTY_CHICK</name>
<evidence type="ECO:0000250" key="1">
    <source>
        <dbReference type="UniProtKB" id="Q6XUX1"/>
    </source>
</evidence>
<evidence type="ECO:0000250" key="2">
    <source>
        <dbReference type="UniProtKB" id="Q6XUX3"/>
    </source>
</evidence>
<evidence type="ECO:0000255" key="3"/>
<evidence type="ECO:0000255" key="4">
    <source>
        <dbReference type="PROSITE-ProRule" id="PRU00159"/>
    </source>
</evidence>
<evidence type="ECO:0000255" key="5">
    <source>
        <dbReference type="PROSITE-ProRule" id="PRU10027"/>
    </source>
</evidence>
<evidence type="ECO:0000269" key="6">
    <source>
    </source>
</evidence>
<gene>
    <name type="primary">DSTYK</name>
    <name type="synonym">RIPK5</name>
</gene>